<proteinExistence type="inferred from homology"/>
<feature type="chain" id="PRO_0000270077" description="Heme-degrading monooxygenase">
    <location>
        <begin position="1"/>
        <end position="121"/>
    </location>
</feature>
<feature type="domain" description="ABM" evidence="1">
    <location>
        <begin position="2"/>
        <end position="101"/>
    </location>
</feature>
<feature type="region of interest" description="Disordered" evidence="2">
    <location>
        <begin position="76"/>
        <end position="98"/>
    </location>
</feature>
<feature type="compositionally biased region" description="Basic and acidic residues" evidence="2">
    <location>
        <begin position="78"/>
        <end position="98"/>
    </location>
</feature>
<feature type="binding site" evidence="1">
    <location>
        <position position="6"/>
    </location>
    <ligand>
        <name>Fe cation</name>
        <dbReference type="ChEBI" id="CHEBI:24875"/>
    </ligand>
</feature>
<feature type="binding site" description="axial binding residue" evidence="1">
    <location>
        <position position="84"/>
    </location>
    <ligand>
        <name>heme</name>
        <dbReference type="ChEBI" id="CHEBI:30413"/>
    </ligand>
    <ligandPart>
        <name>Fe</name>
        <dbReference type="ChEBI" id="CHEBI:18248"/>
    </ligandPart>
</feature>
<feature type="site" description="Transition state stabilizer" evidence="1">
    <location>
        <position position="74"/>
    </location>
</feature>
<comment type="function">
    <text evidence="1">Allows bacterial pathogens to use the host heme as an iron source. Catalyzes the oxidative degradation of the heme macrocyclic porphyrin ring to the biliverdin in the presence of a suitable electron donor such as ascorbate or NADPH--cytochrome P450 reductase, with subsequent release of free iron.</text>
</comment>
<comment type="catalytic activity">
    <reaction evidence="1">
        <text>heme b + 3 reduced [NADPH--hemoprotein reductase] + 3 O2 = biliverdin IXalpha + CO + Fe(2+) + 3 oxidized [NADPH--hemoprotein reductase] + 3 H2O + H(+)</text>
        <dbReference type="Rhea" id="RHEA:21764"/>
        <dbReference type="Rhea" id="RHEA-COMP:11964"/>
        <dbReference type="Rhea" id="RHEA-COMP:11965"/>
        <dbReference type="ChEBI" id="CHEBI:15377"/>
        <dbReference type="ChEBI" id="CHEBI:15378"/>
        <dbReference type="ChEBI" id="CHEBI:15379"/>
        <dbReference type="ChEBI" id="CHEBI:17245"/>
        <dbReference type="ChEBI" id="CHEBI:29033"/>
        <dbReference type="ChEBI" id="CHEBI:57618"/>
        <dbReference type="ChEBI" id="CHEBI:57991"/>
        <dbReference type="ChEBI" id="CHEBI:58210"/>
        <dbReference type="ChEBI" id="CHEBI:60344"/>
        <dbReference type="EC" id="1.14.14.18"/>
    </reaction>
</comment>
<comment type="subunit">
    <text evidence="1">Homodimer.</text>
</comment>
<comment type="subcellular location">
    <subcellularLocation>
        <location evidence="1">Cytoplasm</location>
    </subcellularLocation>
</comment>
<comment type="similarity">
    <text evidence="1">Belongs to the antibiotic biosynthesis monooxygenase family. Heme-degrading monooxygenase IsdG subfamily.</text>
</comment>
<name>HDOX_LISIN</name>
<sequence length="121" mass="13785">MIIVTNTIKVEKGAAEHVIRQFTGANGDGHPTKDIAEVEGFLGFELWHSKPEDKDYEEVVVTSKWESEEAQRNWVKSDSFKKAHGRTKDTREQREDRKGIVGNAIARFEVVHVQNPVIVEK</sequence>
<protein>
    <recommendedName>
        <fullName evidence="1">Heme-degrading monooxygenase</fullName>
        <ecNumber evidence="1">1.14.14.18</ecNumber>
    </recommendedName>
    <alternativeName>
        <fullName evidence="1">Heme oxygenase</fullName>
    </alternativeName>
    <alternativeName>
        <fullName evidence="1">Iron-regulated surface determinant</fullName>
    </alternativeName>
    <alternativeName>
        <fullName evidence="1">Iron-responsive surface determinant</fullName>
    </alternativeName>
</protein>
<gene>
    <name evidence="1" type="primary">isdG</name>
    <name type="ordered locus">lin0487</name>
</gene>
<reference key="1">
    <citation type="journal article" date="2001" name="Science">
        <title>Comparative genomics of Listeria species.</title>
        <authorList>
            <person name="Glaser P."/>
            <person name="Frangeul L."/>
            <person name="Buchrieser C."/>
            <person name="Rusniok C."/>
            <person name="Amend A."/>
            <person name="Baquero F."/>
            <person name="Berche P."/>
            <person name="Bloecker H."/>
            <person name="Brandt P."/>
            <person name="Chakraborty T."/>
            <person name="Charbit A."/>
            <person name="Chetouani F."/>
            <person name="Couve E."/>
            <person name="de Daruvar A."/>
            <person name="Dehoux P."/>
            <person name="Domann E."/>
            <person name="Dominguez-Bernal G."/>
            <person name="Duchaud E."/>
            <person name="Durant L."/>
            <person name="Dussurget O."/>
            <person name="Entian K.-D."/>
            <person name="Fsihi H."/>
            <person name="Garcia-del Portillo F."/>
            <person name="Garrido P."/>
            <person name="Gautier L."/>
            <person name="Goebel W."/>
            <person name="Gomez-Lopez N."/>
            <person name="Hain T."/>
            <person name="Hauf J."/>
            <person name="Jackson D."/>
            <person name="Jones L.-M."/>
            <person name="Kaerst U."/>
            <person name="Kreft J."/>
            <person name="Kuhn M."/>
            <person name="Kunst F."/>
            <person name="Kurapkat G."/>
            <person name="Madueno E."/>
            <person name="Maitournam A."/>
            <person name="Mata Vicente J."/>
            <person name="Ng E."/>
            <person name="Nedjari H."/>
            <person name="Nordsiek G."/>
            <person name="Novella S."/>
            <person name="de Pablos B."/>
            <person name="Perez-Diaz J.-C."/>
            <person name="Purcell R."/>
            <person name="Remmel B."/>
            <person name="Rose M."/>
            <person name="Schlueter T."/>
            <person name="Simoes N."/>
            <person name="Tierrez A."/>
            <person name="Vazquez-Boland J.-A."/>
            <person name="Voss H."/>
            <person name="Wehland J."/>
            <person name="Cossart P."/>
        </authorList>
    </citation>
    <scope>NUCLEOTIDE SEQUENCE [LARGE SCALE GENOMIC DNA]</scope>
    <source>
        <strain>ATCC BAA-680 / CLIP 11262</strain>
    </source>
</reference>
<dbReference type="EC" id="1.14.14.18" evidence="1"/>
<dbReference type="EMBL" id="AL596165">
    <property type="protein sequence ID" value="CAC95719.1"/>
    <property type="molecule type" value="Genomic_DNA"/>
</dbReference>
<dbReference type="RefSeq" id="WP_003721271.1">
    <property type="nucleotide sequence ID" value="NC_003212.1"/>
</dbReference>
<dbReference type="SMR" id="Q7AP29"/>
<dbReference type="STRING" id="272626.gene:17564813"/>
<dbReference type="GeneID" id="93233935"/>
<dbReference type="KEGG" id="lin:lin0487"/>
<dbReference type="eggNOG" id="COG2329">
    <property type="taxonomic scope" value="Bacteria"/>
</dbReference>
<dbReference type="HOGENOM" id="CLU_141544_2_0_9"/>
<dbReference type="OrthoDB" id="384737at2"/>
<dbReference type="Proteomes" id="UP000002513">
    <property type="component" value="Chromosome"/>
</dbReference>
<dbReference type="GO" id="GO:0005737">
    <property type="term" value="C:cytoplasm"/>
    <property type="evidence" value="ECO:0007669"/>
    <property type="project" value="UniProtKB-SubCell"/>
</dbReference>
<dbReference type="GO" id="GO:0020037">
    <property type="term" value="F:heme binding"/>
    <property type="evidence" value="ECO:0007669"/>
    <property type="project" value="UniProtKB-UniRule"/>
</dbReference>
<dbReference type="GO" id="GO:0004392">
    <property type="term" value="F:heme oxygenase (decyclizing) activity"/>
    <property type="evidence" value="ECO:0007669"/>
    <property type="project" value="UniProtKB-UniRule"/>
</dbReference>
<dbReference type="GO" id="GO:0005506">
    <property type="term" value="F:iron ion binding"/>
    <property type="evidence" value="ECO:0007669"/>
    <property type="project" value="UniProtKB-UniRule"/>
</dbReference>
<dbReference type="GO" id="GO:0042167">
    <property type="term" value="P:heme catabolic process"/>
    <property type="evidence" value="ECO:0007669"/>
    <property type="project" value="UniProtKB-UniRule"/>
</dbReference>
<dbReference type="GO" id="GO:0033212">
    <property type="term" value="P:iron import into cell"/>
    <property type="evidence" value="ECO:0007669"/>
    <property type="project" value="InterPro"/>
</dbReference>
<dbReference type="Gene3D" id="3.30.70.100">
    <property type="match status" value="1"/>
</dbReference>
<dbReference type="HAMAP" id="MF_01272">
    <property type="entry name" value="Heme_degrading_monooxygenase"/>
    <property type="match status" value="1"/>
</dbReference>
<dbReference type="InterPro" id="IPR007138">
    <property type="entry name" value="ABM_dom"/>
</dbReference>
<dbReference type="InterPro" id="IPR011008">
    <property type="entry name" value="Dimeric_a/b-barrel"/>
</dbReference>
<dbReference type="InterPro" id="IPR050404">
    <property type="entry name" value="Heme-degrading_MO"/>
</dbReference>
<dbReference type="InterPro" id="IPR023953">
    <property type="entry name" value="IsdG"/>
</dbReference>
<dbReference type="NCBIfam" id="NF009841">
    <property type="entry name" value="PRK13316.1"/>
    <property type="match status" value="1"/>
</dbReference>
<dbReference type="PANTHER" id="PTHR34474:SF4">
    <property type="entry name" value="HEME OXYGENASE (STAPHYLOBILIN-PRODUCING) 1"/>
    <property type="match status" value="1"/>
</dbReference>
<dbReference type="PANTHER" id="PTHR34474">
    <property type="entry name" value="SIGNAL TRANSDUCTION PROTEIN TRAP"/>
    <property type="match status" value="1"/>
</dbReference>
<dbReference type="Pfam" id="PF03992">
    <property type="entry name" value="ABM"/>
    <property type="match status" value="1"/>
</dbReference>
<dbReference type="SUPFAM" id="SSF54909">
    <property type="entry name" value="Dimeric alpha+beta barrel"/>
    <property type="match status" value="1"/>
</dbReference>
<dbReference type="PROSITE" id="PS51725">
    <property type="entry name" value="ABM"/>
    <property type="match status" value="1"/>
</dbReference>
<evidence type="ECO:0000255" key="1">
    <source>
        <dbReference type="HAMAP-Rule" id="MF_01272"/>
    </source>
</evidence>
<evidence type="ECO:0000256" key="2">
    <source>
        <dbReference type="SAM" id="MobiDB-lite"/>
    </source>
</evidence>
<keyword id="KW-0963">Cytoplasm</keyword>
<keyword id="KW-0349">Heme</keyword>
<keyword id="KW-0408">Iron</keyword>
<keyword id="KW-0479">Metal-binding</keyword>
<keyword id="KW-0503">Monooxygenase</keyword>
<keyword id="KW-0560">Oxidoreductase</keyword>
<accession>Q7AP29</accession>
<organism>
    <name type="scientific">Listeria innocua serovar 6a (strain ATCC BAA-680 / CLIP 11262)</name>
    <dbReference type="NCBI Taxonomy" id="272626"/>
    <lineage>
        <taxon>Bacteria</taxon>
        <taxon>Bacillati</taxon>
        <taxon>Bacillota</taxon>
        <taxon>Bacilli</taxon>
        <taxon>Bacillales</taxon>
        <taxon>Listeriaceae</taxon>
        <taxon>Listeria</taxon>
    </lineage>
</organism>